<proteinExistence type="evidence at transcript level"/>
<sequence length="811" mass="90357">MTFLPLLFIFFFLTSIPFPAFSQYNDRSTLLNLKRDLGDPLSLRLWNDTSSPCNWPRITCTAGNVTEINFQNQNFTGTVPTTICNFPNLKSLNLSFNYFAGEFPTVLYNCTKLQYLDLSQNLFNGSLPDDINRLAPKLKYLDLAANSFAGDIPKNIGRISKLKVLNLYMSEYDGTFPSEIGDLSELEELQLALNDKFTPVKLPTEFGKLKKLKYMWLEEMNLIGEISAVVFENMTDLKHVDLSVNNLTGRIPDVLFGLKNLTELYLFANDLTGEIPKSISAKNLVHLDLSANNLNGSIPESIGNLTNLELLYLFVNELTGEIPRAIGKLPELKELKLFTNKLTGEIPAEIGFISKLERFEVSENQLTGKLPENLCHGGKLQSVIVYSNNLTGEIPESLGDCETLSSVLLQNNGFSGSVTISNNTRSNNNFTGKIPSFICELHSLILLDLSTNKFNGSIPRCIANLSTLEVLNLGKNHLSGSIPENISTSVKSIDIGHNQLAGKLPRSLVRISSLEVLNVESNKINDTFPFWLDSMQQLQVLVLRSNAFHGSINQNGFSKLRIIDISGNHFNGTLPLDFFVNWTAMFSLGKIEDQYMGTNYMRTNYYSDSIVVMIKGIALEMVRILNTFTTIDFSGNKFEGEIPRSVGLLKELHVLNLSNNGFTGHIPSSMGNLIELESLDVSQNKLSGEIPPELGKLSYLAYMNFSQNQFVGLVPGGTQFQTQPCSSFADNPRLFGLSLERVCVDIHKKTPQQSEMPEPEEDEEEVMNWTAAAIGSIPGISIGLTMGYILVSYKPEWLMNSGRNKRRIKPI</sequence>
<organism>
    <name type="scientific">Arabidopsis thaliana</name>
    <name type="common">Mouse-ear cress</name>
    <dbReference type="NCBI Taxonomy" id="3702"/>
    <lineage>
        <taxon>Eukaryota</taxon>
        <taxon>Viridiplantae</taxon>
        <taxon>Streptophyta</taxon>
        <taxon>Embryophyta</taxon>
        <taxon>Tracheophyta</taxon>
        <taxon>Spermatophyta</taxon>
        <taxon>Magnoliopsida</taxon>
        <taxon>eudicotyledons</taxon>
        <taxon>Gunneridae</taxon>
        <taxon>Pentapetalae</taxon>
        <taxon>rosids</taxon>
        <taxon>malvids</taxon>
        <taxon>Brassicales</taxon>
        <taxon>Brassicaceae</taxon>
        <taxon>Camelineae</taxon>
        <taxon>Arabidopsis</taxon>
    </lineage>
</organism>
<reference key="1">
    <citation type="journal article" date="2000" name="Nature">
        <title>Sequence and analysis of chromosome 5 of the plant Arabidopsis thaliana.</title>
        <authorList>
            <person name="Tabata S."/>
            <person name="Kaneko T."/>
            <person name="Nakamura Y."/>
            <person name="Kotani H."/>
            <person name="Kato T."/>
            <person name="Asamizu E."/>
            <person name="Miyajima N."/>
            <person name="Sasamoto S."/>
            <person name="Kimura T."/>
            <person name="Hosouchi T."/>
            <person name="Kawashima K."/>
            <person name="Kohara M."/>
            <person name="Matsumoto M."/>
            <person name="Matsuno A."/>
            <person name="Muraki A."/>
            <person name="Nakayama S."/>
            <person name="Nakazaki N."/>
            <person name="Naruo K."/>
            <person name="Okumura S."/>
            <person name="Shinpo S."/>
            <person name="Takeuchi C."/>
            <person name="Wada T."/>
            <person name="Watanabe A."/>
            <person name="Yamada M."/>
            <person name="Yasuda M."/>
            <person name="Sato S."/>
            <person name="de la Bastide M."/>
            <person name="Huang E."/>
            <person name="Spiegel L."/>
            <person name="Gnoj L."/>
            <person name="O'Shaughnessy A."/>
            <person name="Preston R."/>
            <person name="Habermann K."/>
            <person name="Murray J."/>
            <person name="Johnson D."/>
            <person name="Rohlfing T."/>
            <person name="Nelson J."/>
            <person name="Stoneking T."/>
            <person name="Pepin K."/>
            <person name="Spieth J."/>
            <person name="Sekhon M."/>
            <person name="Armstrong J."/>
            <person name="Becker M."/>
            <person name="Belter E."/>
            <person name="Cordum H."/>
            <person name="Cordes M."/>
            <person name="Courtney L."/>
            <person name="Courtney W."/>
            <person name="Dante M."/>
            <person name="Du H."/>
            <person name="Edwards J."/>
            <person name="Fryman J."/>
            <person name="Haakensen B."/>
            <person name="Lamar E."/>
            <person name="Latreille P."/>
            <person name="Leonard S."/>
            <person name="Meyer R."/>
            <person name="Mulvaney E."/>
            <person name="Ozersky P."/>
            <person name="Riley A."/>
            <person name="Strowmatt C."/>
            <person name="Wagner-McPherson C."/>
            <person name="Wollam A."/>
            <person name="Yoakum M."/>
            <person name="Bell M."/>
            <person name="Dedhia N."/>
            <person name="Parnell L."/>
            <person name="Shah R."/>
            <person name="Rodriguez M."/>
            <person name="Hoon See L."/>
            <person name="Vil D."/>
            <person name="Baker J."/>
            <person name="Kirchoff K."/>
            <person name="Toth K."/>
            <person name="King L."/>
            <person name="Bahret A."/>
            <person name="Miller B."/>
            <person name="Marra M.A."/>
            <person name="Martienssen R."/>
            <person name="McCombie W.R."/>
            <person name="Wilson R.K."/>
            <person name="Murphy G."/>
            <person name="Bancroft I."/>
            <person name="Volckaert G."/>
            <person name="Wambutt R."/>
            <person name="Duesterhoeft A."/>
            <person name="Stiekema W."/>
            <person name="Pohl T."/>
            <person name="Entian K.-D."/>
            <person name="Terryn N."/>
            <person name="Hartley N."/>
            <person name="Bent E."/>
            <person name="Johnson S."/>
            <person name="Langham S.-A."/>
            <person name="McCullagh B."/>
            <person name="Robben J."/>
            <person name="Grymonprez B."/>
            <person name="Zimmermann W."/>
            <person name="Ramsperger U."/>
            <person name="Wedler H."/>
            <person name="Balke K."/>
            <person name="Wedler E."/>
            <person name="Peters S."/>
            <person name="van Staveren M."/>
            <person name="Dirkse W."/>
            <person name="Mooijman P."/>
            <person name="Klein Lankhorst R."/>
            <person name="Weitzenegger T."/>
            <person name="Bothe G."/>
            <person name="Rose M."/>
            <person name="Hauf J."/>
            <person name="Berneiser S."/>
            <person name="Hempel S."/>
            <person name="Feldpausch M."/>
            <person name="Lamberth S."/>
            <person name="Villarroel R."/>
            <person name="Gielen J."/>
            <person name="Ardiles W."/>
            <person name="Bents O."/>
            <person name="Lemcke K."/>
            <person name="Kolesov G."/>
            <person name="Mayer K.F.X."/>
            <person name="Rudd S."/>
            <person name="Schoof H."/>
            <person name="Schueller C."/>
            <person name="Zaccaria P."/>
            <person name="Mewes H.-W."/>
            <person name="Bevan M."/>
            <person name="Fransz P.F."/>
        </authorList>
    </citation>
    <scope>NUCLEOTIDE SEQUENCE [LARGE SCALE GENOMIC DNA]</scope>
    <source>
        <strain>cv. Columbia</strain>
    </source>
</reference>
<reference key="2">
    <citation type="journal article" date="2017" name="Plant J.">
        <title>Araport11: a complete reannotation of the Arabidopsis thaliana reference genome.</title>
        <authorList>
            <person name="Cheng C.Y."/>
            <person name="Krishnakumar V."/>
            <person name="Chan A.P."/>
            <person name="Thibaud-Nissen F."/>
            <person name="Schobel S."/>
            <person name="Town C.D."/>
        </authorList>
    </citation>
    <scope>GENOME REANNOTATION</scope>
    <source>
        <strain>cv. Columbia</strain>
    </source>
</reference>
<reference key="3">
    <citation type="journal article" date="2003" name="Science">
        <title>Empirical analysis of transcriptional activity in the Arabidopsis genome.</title>
        <authorList>
            <person name="Yamada K."/>
            <person name="Lim J."/>
            <person name="Dale J.M."/>
            <person name="Chen H."/>
            <person name="Shinn P."/>
            <person name="Palm C.J."/>
            <person name="Southwick A.M."/>
            <person name="Wu H.C."/>
            <person name="Kim C.J."/>
            <person name="Nguyen M."/>
            <person name="Pham P.K."/>
            <person name="Cheuk R.F."/>
            <person name="Karlin-Newmann G."/>
            <person name="Liu S.X."/>
            <person name="Lam B."/>
            <person name="Sakano H."/>
            <person name="Wu T."/>
            <person name="Yu G."/>
            <person name="Miranda M."/>
            <person name="Quach H.L."/>
            <person name="Tripp M."/>
            <person name="Chang C.H."/>
            <person name="Lee J.M."/>
            <person name="Toriumi M.J."/>
            <person name="Chan M.M."/>
            <person name="Tang C.C."/>
            <person name="Onodera C.S."/>
            <person name="Deng J.M."/>
            <person name="Akiyama K."/>
            <person name="Ansari Y."/>
            <person name="Arakawa T."/>
            <person name="Banh J."/>
            <person name="Banno F."/>
            <person name="Bowser L."/>
            <person name="Brooks S.Y."/>
            <person name="Carninci P."/>
            <person name="Chao Q."/>
            <person name="Choy N."/>
            <person name="Enju A."/>
            <person name="Goldsmith A.D."/>
            <person name="Gurjal M."/>
            <person name="Hansen N.F."/>
            <person name="Hayashizaki Y."/>
            <person name="Johnson-Hopson C."/>
            <person name="Hsuan V.W."/>
            <person name="Iida K."/>
            <person name="Karnes M."/>
            <person name="Khan S."/>
            <person name="Koesema E."/>
            <person name="Ishida J."/>
            <person name="Jiang P.X."/>
            <person name="Jones T."/>
            <person name="Kawai J."/>
            <person name="Kamiya A."/>
            <person name="Meyers C."/>
            <person name="Nakajima M."/>
            <person name="Narusaka M."/>
            <person name="Seki M."/>
            <person name="Sakurai T."/>
            <person name="Satou M."/>
            <person name="Tamse R."/>
            <person name="Vaysberg M."/>
            <person name="Wallender E.K."/>
            <person name="Wong C."/>
            <person name="Yamamura Y."/>
            <person name="Yuan S."/>
            <person name="Shinozaki K."/>
            <person name="Davis R.W."/>
            <person name="Theologis A."/>
            <person name="Ecker J.R."/>
        </authorList>
    </citation>
    <scope>NUCLEOTIDE SEQUENCE [LARGE SCALE MRNA] (ISOFORM 2)</scope>
    <source>
        <strain>cv. Columbia</strain>
    </source>
</reference>
<reference key="4">
    <citation type="journal article" date="2005" name="Plant Physiol.">
        <title>Phylogenomic analysis of the receptor-like proteins of rice and Arabidopsis.</title>
        <authorList>
            <person name="Fritz-Laylin L.K."/>
            <person name="Krishnamurthy N."/>
            <person name="Toer M."/>
            <person name="Sjoelander K.V."/>
            <person name="Jones J.D."/>
        </authorList>
    </citation>
    <scope>GENE FAMILY</scope>
</reference>
<reference key="5">
    <citation type="journal article" date="2005" name="Plant Physiol.">
        <title>Loss-of-function mutations in chitin responsive genes show increased susceptibility to the powdery mildew pathogen Erysiphe cichoracearum.</title>
        <authorList>
            <person name="Ramonell K."/>
            <person name="Berrocal-Lobo M."/>
            <person name="Koh S."/>
            <person name="Wan J."/>
            <person name="Edwards H."/>
            <person name="Stacey G."/>
            <person name="Somerville S."/>
        </authorList>
    </citation>
    <scope>FUNCTION</scope>
    <scope>INDUCTION BY CHITIN</scope>
    <scope>DISRUPTION PHENOTYPE</scope>
</reference>
<reference key="6">
    <citation type="journal article" date="2008" name="Plant Physiol.">
        <title>A genome-wide functional investigation into the roles of receptor-like proteins in Arabidopsis.</title>
        <authorList>
            <person name="Wang G."/>
            <person name="Ellendorff U."/>
            <person name="Kemp B."/>
            <person name="Mansfield J.W."/>
            <person name="Forsyth A."/>
            <person name="Mitchell K."/>
            <person name="Bastas K."/>
            <person name="Liu C.-M."/>
            <person name="Woods-Toer A."/>
            <person name="Zipfel C."/>
            <person name="de Wit P.J.G.M."/>
            <person name="Jones J.D.G."/>
            <person name="Toer M."/>
            <person name="Thomma B.P.H.J."/>
        </authorList>
    </citation>
    <scope>GENE FAMILY</scope>
    <scope>NOMENCLATURE</scope>
    <source>
        <strain>cv. Columbia</strain>
    </source>
</reference>
<protein>
    <recommendedName>
        <fullName evidence="4">Receptor-like protein 52</fullName>
        <shortName evidence="4">AtRLP52</shortName>
    </recommendedName>
</protein>
<keyword id="KW-0025">Alternative splicing</keyword>
<keyword id="KW-1003">Cell membrane</keyword>
<keyword id="KW-0325">Glycoprotein</keyword>
<keyword id="KW-0433">Leucine-rich repeat</keyword>
<keyword id="KW-0472">Membrane</keyword>
<keyword id="KW-0611">Plant defense</keyword>
<keyword id="KW-0675">Receptor</keyword>
<keyword id="KW-1185">Reference proteome</keyword>
<keyword id="KW-0677">Repeat</keyword>
<keyword id="KW-0732">Signal</keyword>
<keyword id="KW-0812">Transmembrane</keyword>
<keyword id="KW-1133">Transmembrane helix</keyword>
<gene>
    <name evidence="4" type="primary">RLP52</name>
    <name evidence="6" type="ordered locus">At5g25910</name>
    <name evidence="7" type="ORF">T1N24.21</name>
</gene>
<feature type="signal peptide" evidence="1">
    <location>
        <begin position="1"/>
        <end position="22"/>
    </location>
</feature>
<feature type="chain" id="PRO_5011948720" description="Receptor-like protein 52">
    <location>
        <begin position="23"/>
        <end position="811"/>
    </location>
</feature>
<feature type="topological domain" description="Extracellular" evidence="1">
    <location>
        <begin position="23"/>
        <end position="770"/>
    </location>
</feature>
<feature type="transmembrane region" description="Helical" evidence="1">
    <location>
        <begin position="771"/>
        <end position="791"/>
    </location>
</feature>
<feature type="topological domain" description="Cytoplasmic" evidence="1">
    <location>
        <begin position="792"/>
        <end position="811"/>
    </location>
</feature>
<feature type="repeat" description="LRR 1" evidence="1">
    <location>
        <begin position="62"/>
        <end position="86"/>
    </location>
</feature>
<feature type="repeat" description="LRR 2" evidence="1">
    <location>
        <begin position="87"/>
        <end position="110"/>
    </location>
</feature>
<feature type="repeat" description="LRR 3" evidence="1">
    <location>
        <begin position="112"/>
        <end position="134"/>
    </location>
</feature>
<feature type="repeat" description="LRR 4" evidence="1">
    <location>
        <begin position="135"/>
        <end position="159"/>
    </location>
</feature>
<feature type="repeat" description="LRR 5" evidence="1">
    <location>
        <begin position="161"/>
        <end position="183"/>
    </location>
</feature>
<feature type="repeat" description="LRR 6" evidence="1">
    <location>
        <begin position="184"/>
        <end position="208"/>
    </location>
</feature>
<feature type="repeat" description="LRR 7; degenerate" evidence="5">
    <location>
        <begin position="211"/>
        <end position="233"/>
    </location>
</feature>
<feature type="repeat" description="LRR 8" evidence="1">
    <location>
        <begin position="234"/>
        <end position="258"/>
    </location>
</feature>
<feature type="repeat" description="LRR 9" evidence="1">
    <location>
        <begin position="260"/>
        <end position="281"/>
    </location>
</feature>
<feature type="repeat" description="LRR 10" evidence="1">
    <location>
        <begin position="282"/>
        <end position="305"/>
    </location>
</feature>
<feature type="repeat" description="LRR 11" evidence="1">
    <location>
        <begin position="307"/>
        <end position="329"/>
    </location>
</feature>
<feature type="repeat" description="LRR 12" evidence="1">
    <location>
        <begin position="330"/>
        <end position="354"/>
    </location>
</feature>
<feature type="repeat" description="LRR 13" evidence="1">
    <location>
        <begin position="356"/>
        <end position="377"/>
    </location>
</feature>
<feature type="repeat" description="LRR 14" evidence="1">
    <location>
        <begin position="379"/>
        <end position="401"/>
    </location>
</feature>
<feature type="repeat" description="LRR 15" evidence="1">
    <location>
        <begin position="403"/>
        <end position="427"/>
    </location>
</feature>
<feature type="repeat" description="LRR 16" evidence="1">
    <location>
        <begin position="441"/>
        <end position="465"/>
    </location>
</feature>
<feature type="repeat" description="LRR 17" evidence="1">
    <location>
        <begin position="466"/>
        <end position="489"/>
    </location>
</feature>
<feature type="repeat" description="LRR 18" evidence="1">
    <location>
        <begin position="491"/>
        <end position="511"/>
    </location>
</feature>
<feature type="repeat" description="LRR 19" evidence="1">
    <location>
        <begin position="512"/>
        <end position="537"/>
    </location>
</feature>
<feature type="repeat" description="LRR 20" evidence="1">
    <location>
        <begin position="539"/>
        <end position="557"/>
    </location>
</feature>
<feature type="repeat" description="LRR 21" evidence="1">
    <location>
        <begin position="558"/>
        <end position="581"/>
    </location>
</feature>
<feature type="repeat" description="LRR 22" evidence="1">
    <location>
        <begin position="625"/>
        <end position="649"/>
    </location>
</feature>
<feature type="repeat" description="LRR 23" evidence="1">
    <location>
        <begin position="650"/>
        <end position="673"/>
    </location>
</feature>
<feature type="repeat" description="LRR 23" evidence="1">
    <location>
        <begin position="674"/>
        <end position="697"/>
    </location>
</feature>
<feature type="repeat" description="LRR 24" evidence="1">
    <location>
        <begin position="699"/>
        <end position="722"/>
    </location>
</feature>
<feature type="glycosylation site" description="N-linked (GlcNAc...) asparagine" evidence="2">
    <location>
        <position position="47"/>
    </location>
</feature>
<feature type="glycosylation site" description="N-linked (GlcNAc...) asparagine" evidence="2">
    <location>
        <position position="64"/>
    </location>
</feature>
<feature type="glycosylation site" description="N-linked (GlcNAc...) asparagine" evidence="2">
    <location>
        <position position="74"/>
    </location>
</feature>
<feature type="glycosylation site" description="N-linked (GlcNAc...) asparagine" evidence="2">
    <location>
        <position position="93"/>
    </location>
</feature>
<feature type="glycosylation site" description="N-linked (GlcNAc...) asparagine" evidence="2">
    <location>
        <position position="109"/>
    </location>
</feature>
<feature type="glycosylation site" description="N-linked (GlcNAc...) asparagine" evidence="2">
    <location>
        <position position="124"/>
    </location>
</feature>
<feature type="glycosylation site" description="N-linked (GlcNAc...) asparagine" evidence="2">
    <location>
        <position position="233"/>
    </location>
</feature>
<feature type="glycosylation site" description="N-linked (GlcNAc...) asparagine" evidence="2">
    <location>
        <position position="246"/>
    </location>
</feature>
<feature type="glycosylation site" description="N-linked (GlcNAc...) asparagine" evidence="2">
    <location>
        <position position="260"/>
    </location>
</feature>
<feature type="glycosylation site" description="N-linked (GlcNAc...) asparagine" evidence="2">
    <location>
        <position position="295"/>
    </location>
</feature>
<feature type="glycosylation site" description="N-linked (GlcNAc...) asparagine" evidence="2">
    <location>
        <position position="304"/>
    </location>
</feature>
<feature type="glycosylation site" description="N-linked (GlcNAc...) asparagine" evidence="2">
    <location>
        <position position="389"/>
    </location>
</feature>
<feature type="glycosylation site" description="N-linked (GlcNAc...) asparagine" evidence="2">
    <location>
        <position position="422"/>
    </location>
</feature>
<feature type="glycosylation site" description="N-linked (GlcNAc...) asparagine" evidence="2">
    <location>
        <position position="429"/>
    </location>
</feature>
<feature type="glycosylation site" description="N-linked (GlcNAc...) asparagine" evidence="2">
    <location>
        <position position="455"/>
    </location>
</feature>
<feature type="glycosylation site" description="N-linked (GlcNAc...) asparagine" evidence="2">
    <location>
        <position position="464"/>
    </location>
</feature>
<feature type="glycosylation site" description="N-linked (GlcNAc...) asparagine" evidence="2">
    <location>
        <position position="485"/>
    </location>
</feature>
<feature type="glycosylation site" description="N-linked (GlcNAc...) asparagine" evidence="2">
    <location>
        <position position="525"/>
    </location>
</feature>
<feature type="glycosylation site" description="N-linked (GlcNAc...) asparagine" evidence="2">
    <location>
        <position position="571"/>
    </location>
</feature>
<feature type="glycosylation site" description="N-linked (GlcNAc...) asparagine" evidence="2">
    <location>
        <position position="581"/>
    </location>
</feature>
<feature type="glycosylation site" description="N-linked (GlcNAc...) asparagine" evidence="2">
    <location>
        <position position="656"/>
    </location>
</feature>
<feature type="glycosylation site" description="N-linked (GlcNAc...) asparagine" evidence="2">
    <location>
        <position position="704"/>
    </location>
</feature>
<feature type="splice variant" id="VSP_059572" description="In isoform 2.">
    <original>SNNNFTGKIPSFICELHSLILLD</original>
    <variation>ESFEQHFHRFQKINEIYRATIYE</variation>
    <location>
        <begin position="426"/>
        <end position="448"/>
    </location>
</feature>
<feature type="splice variant" id="VSP_059573" description="In isoform 2.">
    <location>
        <begin position="449"/>
        <end position="811"/>
    </location>
</feature>
<evidence type="ECO:0000255" key="1"/>
<evidence type="ECO:0000255" key="2">
    <source>
        <dbReference type="PROSITE-ProRule" id="PRU00498"/>
    </source>
</evidence>
<evidence type="ECO:0000269" key="3">
    <source>
    </source>
</evidence>
<evidence type="ECO:0000303" key="4">
    <source>
    </source>
</evidence>
<evidence type="ECO:0000305" key="5"/>
<evidence type="ECO:0000312" key="6">
    <source>
        <dbReference type="Araport" id="AT5G25910"/>
    </source>
</evidence>
<evidence type="ECO:0000312" key="7">
    <source>
        <dbReference type="EMBL" id="AAD40136.1"/>
    </source>
</evidence>
<name>RLP52_ARATH</name>
<dbReference type="EMBL" id="AF149413">
    <property type="protein sequence ID" value="AAD40136.1"/>
    <property type="molecule type" value="Genomic_DNA"/>
</dbReference>
<dbReference type="EMBL" id="CP002688">
    <property type="protein sequence ID" value="AED93500.1"/>
    <property type="molecule type" value="Genomic_DNA"/>
</dbReference>
<dbReference type="EMBL" id="BT002464">
    <property type="protein sequence ID" value="AAO00824.1"/>
    <property type="molecule type" value="mRNA"/>
</dbReference>
<dbReference type="EMBL" id="BT009659">
    <property type="protein sequence ID" value="AAP75809.1"/>
    <property type="molecule type" value="mRNA"/>
</dbReference>
<dbReference type="RefSeq" id="NP_197963.1">
    <molecule id="Q7FZR1-1"/>
    <property type="nucleotide sequence ID" value="NM_122492.1"/>
</dbReference>
<dbReference type="SMR" id="Q7FZR1"/>
<dbReference type="STRING" id="3702.Q7FZR1"/>
<dbReference type="GlyCosmos" id="Q7FZR1">
    <property type="glycosylation" value="22 sites, No reported glycans"/>
</dbReference>
<dbReference type="GlyGen" id="Q7FZR1">
    <property type="glycosylation" value="22 sites"/>
</dbReference>
<dbReference type="iPTMnet" id="Q7FZR1"/>
<dbReference type="PaxDb" id="3702-AT5G25910.1"/>
<dbReference type="EnsemblPlants" id="AT5G25910.1">
    <molecule id="Q7FZR1-1"/>
    <property type="protein sequence ID" value="AT5G25910.1"/>
    <property type="gene ID" value="AT5G25910"/>
</dbReference>
<dbReference type="GeneID" id="832660"/>
<dbReference type="Gramene" id="AT5G25910.1">
    <molecule id="Q7FZR1-1"/>
    <property type="protein sequence ID" value="AT5G25910.1"/>
    <property type="gene ID" value="AT5G25910"/>
</dbReference>
<dbReference type="KEGG" id="ath:AT5G25910"/>
<dbReference type="Araport" id="AT5G25910"/>
<dbReference type="TAIR" id="AT5G25910">
    <property type="gene designation" value="RLP52"/>
</dbReference>
<dbReference type="eggNOG" id="KOG0619">
    <property type="taxonomic scope" value="Eukaryota"/>
</dbReference>
<dbReference type="HOGENOM" id="CLU_000288_18_3_1"/>
<dbReference type="InParanoid" id="Q7FZR1"/>
<dbReference type="OMA" id="LSICNFQ"/>
<dbReference type="PhylomeDB" id="Q7FZR1"/>
<dbReference type="PRO" id="PR:Q7FZR1"/>
<dbReference type="Proteomes" id="UP000006548">
    <property type="component" value="Chromosome 5"/>
</dbReference>
<dbReference type="ExpressionAtlas" id="Q7FZR1">
    <property type="expression patterns" value="baseline and differential"/>
</dbReference>
<dbReference type="GO" id="GO:0005886">
    <property type="term" value="C:plasma membrane"/>
    <property type="evidence" value="ECO:0007669"/>
    <property type="project" value="UniProtKB-SubCell"/>
</dbReference>
<dbReference type="GO" id="GO:0050832">
    <property type="term" value="P:defense response to fungus"/>
    <property type="evidence" value="ECO:0000315"/>
    <property type="project" value="TAIR"/>
</dbReference>
<dbReference type="GO" id="GO:0010200">
    <property type="term" value="P:response to chitin"/>
    <property type="evidence" value="ECO:0000270"/>
    <property type="project" value="TAIR"/>
</dbReference>
<dbReference type="FunFam" id="3.80.10.10:FF:000413">
    <property type="entry name" value="Inactive leucine-rich repeat receptor-like protein kinase"/>
    <property type="match status" value="1"/>
</dbReference>
<dbReference type="FunFam" id="3.80.10.10:FF:000111">
    <property type="entry name" value="LRR receptor-like serine/threonine-protein kinase ERECTA"/>
    <property type="match status" value="1"/>
</dbReference>
<dbReference type="FunFam" id="3.80.10.10:FF:000077">
    <property type="entry name" value="LRR receptor-like serine/threonine-protein kinase ERL1"/>
    <property type="match status" value="1"/>
</dbReference>
<dbReference type="FunFam" id="3.80.10.10:FF:002353">
    <property type="entry name" value="Receptor-like protein 52"/>
    <property type="match status" value="1"/>
</dbReference>
<dbReference type="Gene3D" id="3.80.10.10">
    <property type="entry name" value="Ribonuclease Inhibitor"/>
    <property type="match status" value="3"/>
</dbReference>
<dbReference type="InterPro" id="IPR001611">
    <property type="entry name" value="Leu-rich_rpt"/>
</dbReference>
<dbReference type="InterPro" id="IPR003591">
    <property type="entry name" value="Leu-rich_rpt_typical-subtyp"/>
</dbReference>
<dbReference type="InterPro" id="IPR032675">
    <property type="entry name" value="LRR_dom_sf"/>
</dbReference>
<dbReference type="InterPro" id="IPR013210">
    <property type="entry name" value="LRR_N_plant-typ"/>
</dbReference>
<dbReference type="PANTHER" id="PTHR27000">
    <property type="entry name" value="LEUCINE-RICH REPEAT RECEPTOR-LIKE PROTEIN KINASE FAMILY PROTEIN-RELATED"/>
    <property type="match status" value="1"/>
</dbReference>
<dbReference type="PANTHER" id="PTHR27000:SF282">
    <property type="entry name" value="OS06G0557100 PROTEIN"/>
    <property type="match status" value="1"/>
</dbReference>
<dbReference type="Pfam" id="PF00560">
    <property type="entry name" value="LRR_1"/>
    <property type="match status" value="6"/>
</dbReference>
<dbReference type="Pfam" id="PF13855">
    <property type="entry name" value="LRR_8"/>
    <property type="match status" value="3"/>
</dbReference>
<dbReference type="Pfam" id="PF08263">
    <property type="entry name" value="LRRNT_2"/>
    <property type="match status" value="1"/>
</dbReference>
<dbReference type="SMART" id="SM00369">
    <property type="entry name" value="LRR_TYP"/>
    <property type="match status" value="10"/>
</dbReference>
<dbReference type="SUPFAM" id="SSF52058">
    <property type="entry name" value="L domain-like"/>
    <property type="match status" value="3"/>
</dbReference>
<comment type="function">
    <text evidence="3">Required for defense against powdery mildew pathogen.</text>
</comment>
<comment type="subcellular location">
    <subcellularLocation>
        <location evidence="5">Cell membrane</location>
        <topology evidence="5">Single-pass type I membrane protein</topology>
    </subcellularLocation>
</comment>
<comment type="alternative products">
    <event type="alternative splicing"/>
    <isoform>
        <id>Q7FZR1-1</id>
        <name>1</name>
        <sequence type="displayed"/>
    </isoform>
    <isoform>
        <id>Q7FZR1-2</id>
        <name>2</name>
        <sequence type="described" ref="VSP_059572 VSP_059573"/>
    </isoform>
</comment>
<comment type="induction">
    <text evidence="3">By chitin.</text>
</comment>
<comment type="disruption phenotype">
    <text evidence="3">Enhanced susceptibility to pathogen powdery mildew E.cichoracearum.</text>
</comment>
<comment type="similarity">
    <text evidence="5">Belongs to the RLP family.</text>
</comment>
<accession>Q7FZR1</accession>
<accession>Q8GUJ4</accession>